<name>PSAA_RIPO1</name>
<dbReference type="EC" id="1.97.1.12" evidence="1"/>
<dbReference type="EMBL" id="CP001287">
    <property type="protein sequence ID" value="ACK68035.1"/>
    <property type="molecule type" value="Genomic_DNA"/>
</dbReference>
<dbReference type="RefSeq" id="WP_015785086.1">
    <property type="nucleotide sequence ID" value="NC_011726.1"/>
</dbReference>
<dbReference type="SMR" id="B7K5Y2"/>
<dbReference type="STRING" id="41431.PCC8801_4103"/>
<dbReference type="KEGG" id="cyp:PCC8801_4103"/>
<dbReference type="eggNOG" id="COG2885">
    <property type="taxonomic scope" value="Bacteria"/>
</dbReference>
<dbReference type="HOGENOM" id="CLU_016126_1_0_3"/>
<dbReference type="OrthoDB" id="499313at2"/>
<dbReference type="Proteomes" id="UP000008204">
    <property type="component" value="Chromosome"/>
</dbReference>
<dbReference type="GO" id="GO:0009522">
    <property type="term" value="C:photosystem I"/>
    <property type="evidence" value="ECO:0007669"/>
    <property type="project" value="UniProtKB-KW"/>
</dbReference>
<dbReference type="GO" id="GO:0031676">
    <property type="term" value="C:plasma membrane-derived thylakoid membrane"/>
    <property type="evidence" value="ECO:0007669"/>
    <property type="project" value="UniProtKB-SubCell"/>
</dbReference>
<dbReference type="GO" id="GO:0051539">
    <property type="term" value="F:4 iron, 4 sulfur cluster binding"/>
    <property type="evidence" value="ECO:0007669"/>
    <property type="project" value="UniProtKB-KW"/>
</dbReference>
<dbReference type="GO" id="GO:0016168">
    <property type="term" value="F:chlorophyll binding"/>
    <property type="evidence" value="ECO:0007669"/>
    <property type="project" value="UniProtKB-KW"/>
</dbReference>
<dbReference type="GO" id="GO:0009055">
    <property type="term" value="F:electron transfer activity"/>
    <property type="evidence" value="ECO:0007669"/>
    <property type="project" value="UniProtKB-UniRule"/>
</dbReference>
<dbReference type="GO" id="GO:0000287">
    <property type="term" value="F:magnesium ion binding"/>
    <property type="evidence" value="ECO:0007669"/>
    <property type="project" value="UniProtKB-UniRule"/>
</dbReference>
<dbReference type="GO" id="GO:0016491">
    <property type="term" value="F:oxidoreductase activity"/>
    <property type="evidence" value="ECO:0007669"/>
    <property type="project" value="UniProtKB-KW"/>
</dbReference>
<dbReference type="GO" id="GO:0015979">
    <property type="term" value="P:photosynthesis"/>
    <property type="evidence" value="ECO:0007669"/>
    <property type="project" value="UniProtKB-UniRule"/>
</dbReference>
<dbReference type="Gene3D" id="1.20.1130.10">
    <property type="entry name" value="Photosystem I PsaA/PsaB"/>
    <property type="match status" value="1"/>
</dbReference>
<dbReference type="HAMAP" id="MF_00458">
    <property type="entry name" value="PSI_PsaA"/>
    <property type="match status" value="1"/>
</dbReference>
<dbReference type="InterPro" id="IPR006243">
    <property type="entry name" value="PSI_PsaA"/>
</dbReference>
<dbReference type="InterPro" id="IPR001280">
    <property type="entry name" value="PSI_PsaA/B"/>
</dbReference>
<dbReference type="InterPro" id="IPR020586">
    <property type="entry name" value="PSI_PsaA/B_CS"/>
</dbReference>
<dbReference type="InterPro" id="IPR036408">
    <property type="entry name" value="PSI_PsaA/B_sf"/>
</dbReference>
<dbReference type="NCBIfam" id="TIGR01335">
    <property type="entry name" value="psaA"/>
    <property type="match status" value="1"/>
</dbReference>
<dbReference type="PANTHER" id="PTHR30128">
    <property type="entry name" value="OUTER MEMBRANE PROTEIN, OMPA-RELATED"/>
    <property type="match status" value="1"/>
</dbReference>
<dbReference type="PANTHER" id="PTHR30128:SF19">
    <property type="entry name" value="PHOTOSYSTEM I P700 CHLOROPHYLL A APOPROTEIN A1-RELATED"/>
    <property type="match status" value="1"/>
</dbReference>
<dbReference type="Pfam" id="PF00223">
    <property type="entry name" value="PsaA_PsaB"/>
    <property type="match status" value="1"/>
</dbReference>
<dbReference type="PIRSF" id="PIRSF002905">
    <property type="entry name" value="PSI_A"/>
    <property type="match status" value="1"/>
</dbReference>
<dbReference type="PRINTS" id="PR00257">
    <property type="entry name" value="PHOTSYSPSAAB"/>
</dbReference>
<dbReference type="SUPFAM" id="SSF81558">
    <property type="entry name" value="Photosystem I subunits PsaA/PsaB"/>
    <property type="match status" value="1"/>
</dbReference>
<dbReference type="PROSITE" id="PS00419">
    <property type="entry name" value="PHOTOSYSTEM_I_PSAAB"/>
    <property type="match status" value="1"/>
</dbReference>
<feature type="chain" id="PRO_1000201161" description="Photosystem I P700 chlorophyll a apoprotein A1">
    <location>
        <begin position="1"/>
        <end position="754"/>
    </location>
</feature>
<feature type="transmembrane region" description="Helical; Name=I" evidence="1">
    <location>
        <begin position="72"/>
        <end position="95"/>
    </location>
</feature>
<feature type="transmembrane region" description="Helical; Name=II" evidence="1">
    <location>
        <begin position="158"/>
        <end position="181"/>
    </location>
</feature>
<feature type="transmembrane region" description="Helical; Name=III" evidence="1">
    <location>
        <begin position="197"/>
        <end position="221"/>
    </location>
</feature>
<feature type="transmembrane region" description="Helical; Name=IV" evidence="1">
    <location>
        <begin position="293"/>
        <end position="311"/>
    </location>
</feature>
<feature type="transmembrane region" description="Helical; Name=V" evidence="1">
    <location>
        <begin position="351"/>
        <end position="374"/>
    </location>
</feature>
<feature type="transmembrane region" description="Helical; Name=VI" evidence="1">
    <location>
        <begin position="390"/>
        <end position="416"/>
    </location>
</feature>
<feature type="transmembrane region" description="Helical; Name=VII" evidence="1">
    <location>
        <begin position="438"/>
        <end position="460"/>
    </location>
</feature>
<feature type="transmembrane region" description="Helical; Name=VIII" evidence="1">
    <location>
        <begin position="535"/>
        <end position="553"/>
    </location>
</feature>
<feature type="transmembrane region" description="Helical; Name=IX" evidence="1">
    <location>
        <begin position="593"/>
        <end position="614"/>
    </location>
</feature>
<feature type="transmembrane region" description="Helical; Name=X" evidence="1">
    <location>
        <begin position="668"/>
        <end position="690"/>
    </location>
</feature>
<feature type="transmembrane region" description="Helical; Name=XI" evidence="1">
    <location>
        <begin position="728"/>
        <end position="748"/>
    </location>
</feature>
<feature type="binding site" evidence="1">
    <location>
        <position position="577"/>
    </location>
    <ligand>
        <name>[4Fe-4S] cluster</name>
        <dbReference type="ChEBI" id="CHEBI:49883"/>
        <note>ligand shared between dimeric partners</note>
    </ligand>
</feature>
<feature type="binding site" evidence="1">
    <location>
        <position position="586"/>
    </location>
    <ligand>
        <name>[4Fe-4S] cluster</name>
        <dbReference type="ChEBI" id="CHEBI:49883"/>
        <note>ligand shared between dimeric partners</note>
    </ligand>
</feature>
<feature type="binding site" description="axial binding residue" evidence="1">
    <location>
        <position position="679"/>
    </location>
    <ligand>
        <name>chlorophyll a'</name>
        <dbReference type="ChEBI" id="CHEBI:189419"/>
        <label>A1</label>
    </ligand>
    <ligandPart>
        <name>Mg</name>
        <dbReference type="ChEBI" id="CHEBI:25107"/>
    </ligandPart>
</feature>
<feature type="binding site" description="axial binding residue" evidence="1">
    <location>
        <position position="687"/>
    </location>
    <ligand>
        <name>chlorophyll a</name>
        <dbReference type="ChEBI" id="CHEBI:58416"/>
        <label>A3</label>
    </ligand>
    <ligandPart>
        <name>Mg</name>
        <dbReference type="ChEBI" id="CHEBI:25107"/>
    </ligandPart>
</feature>
<feature type="binding site" evidence="1">
    <location>
        <position position="695"/>
    </location>
    <ligand>
        <name>chlorophyll a</name>
        <dbReference type="ChEBI" id="CHEBI:58416"/>
        <label>A3</label>
    </ligand>
</feature>
<feature type="binding site" evidence="1">
    <location>
        <position position="696"/>
    </location>
    <ligand>
        <name>phylloquinone</name>
        <dbReference type="ChEBI" id="CHEBI:18067"/>
        <label>A</label>
    </ligand>
</feature>
<reference key="1">
    <citation type="journal article" date="2011" name="MBio">
        <title>Novel metabolic attributes of the genus Cyanothece, comprising a group of unicellular nitrogen-fixing Cyanobacteria.</title>
        <authorList>
            <person name="Bandyopadhyay A."/>
            <person name="Elvitigala T."/>
            <person name="Welsh E."/>
            <person name="Stockel J."/>
            <person name="Liberton M."/>
            <person name="Min H."/>
            <person name="Sherman L.A."/>
            <person name="Pakrasi H.B."/>
        </authorList>
    </citation>
    <scope>NUCLEOTIDE SEQUENCE [LARGE SCALE GENOMIC DNA]</scope>
    <source>
        <strain>PCC 8801 / RF-1</strain>
    </source>
</reference>
<keyword id="KW-0004">4Fe-4S</keyword>
<keyword id="KW-0148">Chlorophyll</keyword>
<keyword id="KW-0157">Chromophore</keyword>
<keyword id="KW-0249">Electron transport</keyword>
<keyword id="KW-0408">Iron</keyword>
<keyword id="KW-0411">Iron-sulfur</keyword>
<keyword id="KW-0460">Magnesium</keyword>
<keyword id="KW-0472">Membrane</keyword>
<keyword id="KW-0479">Metal-binding</keyword>
<keyword id="KW-0560">Oxidoreductase</keyword>
<keyword id="KW-0602">Photosynthesis</keyword>
<keyword id="KW-0603">Photosystem I</keyword>
<keyword id="KW-1185">Reference proteome</keyword>
<keyword id="KW-0793">Thylakoid</keyword>
<keyword id="KW-0812">Transmembrane</keyword>
<keyword id="KW-1133">Transmembrane helix</keyword>
<keyword id="KW-0813">Transport</keyword>
<evidence type="ECO:0000255" key="1">
    <source>
        <dbReference type="HAMAP-Rule" id="MF_00458"/>
    </source>
</evidence>
<protein>
    <recommendedName>
        <fullName evidence="1">Photosystem I P700 chlorophyll a apoprotein A1</fullName>
        <ecNumber evidence="1">1.97.1.12</ecNumber>
    </recommendedName>
    <alternativeName>
        <fullName evidence="1">PsaA</fullName>
    </alternativeName>
</protein>
<proteinExistence type="inferred from homology"/>
<sequence length="754" mass="82905">MTISPPEREAKVKVTVDTDPVPASFEKWGQPGHFSRTLAKGPKTTTWIWNLHADAHDFDSQTSDLEDVSRKIFSAHFGHLAVIFVWLSGMYFHGARFSNYEAWLTDPTAIKPSAQVVWPIVGQGILNADVGGGFHGIQITSGLFYLWRASGFTNSYQLYCTAIGGLVMAGLMLFAGWFHYHKKAPKLEWFQNVESMMNHHLAGLLGLGSLGWAGHQIHVSLPINKLLDAGVAAKDIPLPHEFILDSSKMAELYPSFAQGLTPFFTLNWGVYSDFLTFKGGLNPVTGGLWLSDTAHHHLAIAVLFIIAGHMYRTNWGIGHSMKEILDGHKGDPLLFGGEGHTGLYEVLTTSWHAQLAINLALLGSLSIIVAHHMYAMPPYPYQAIDYGTQLSLFTHHVWIGGFLIVGAGAHGAIFMVRDYDPAKNVNNALDRVIRSRDAIISHLNWVCIFLGFHSFGLYIHNDTMRALGRPQDMFSDTAIKLQPIFAQWVQNLHFLAPGGTAPYAGAPASYAFGGETVAIAGKVAIMPIALGTADFMVHHIHAFTIHVTVLILLKGVLYARNSRLIPDKSNLGFRFPCDGPGRGGTCQVSGWDHVFLGLFWMYNSLSIVIFHFSWKMQSDVWGTVAPDGTVSHVTGGNFAQSAITINGWLRDFLWAQAANVINSYGSALSAYGIMFLAGHFVFAFSLMFLFSGRGYWQELIESIVWAHNKLKVAPAIQPRALSIIQGRAVGVAHYLLGGIVTTWAFFLARSLSIG</sequence>
<accession>B7K5Y2</accession>
<comment type="function">
    <text evidence="1">PsaA and PsaB bind P700, the primary electron donor of photosystem I (PSI), as well as the electron acceptors A0, A1 and FX. PSI is a plastocyanin/cytochrome c6-ferredoxin oxidoreductase, converting photonic excitation into a charge separation, which transfers an electron from the donor P700 chlorophyll pair to the spectroscopically characterized acceptors A0, A1, FX, FA and FB in turn. Oxidized P700 is reduced on the lumenal side of the thylakoid membrane by plastocyanin or cytochrome c6.</text>
</comment>
<comment type="catalytic activity">
    <reaction evidence="1">
        <text>reduced [plastocyanin] + hnu + oxidized [2Fe-2S]-[ferredoxin] = oxidized [plastocyanin] + reduced [2Fe-2S]-[ferredoxin]</text>
        <dbReference type="Rhea" id="RHEA:30407"/>
        <dbReference type="Rhea" id="RHEA-COMP:10000"/>
        <dbReference type="Rhea" id="RHEA-COMP:10001"/>
        <dbReference type="Rhea" id="RHEA-COMP:10039"/>
        <dbReference type="Rhea" id="RHEA-COMP:10040"/>
        <dbReference type="ChEBI" id="CHEBI:29036"/>
        <dbReference type="ChEBI" id="CHEBI:30212"/>
        <dbReference type="ChEBI" id="CHEBI:33737"/>
        <dbReference type="ChEBI" id="CHEBI:33738"/>
        <dbReference type="ChEBI" id="CHEBI:49552"/>
        <dbReference type="EC" id="1.97.1.12"/>
    </reaction>
</comment>
<comment type="cofactor">
    <text evidence="1">PSI electron transfer chain: 5 chlorophyll a, 1 chlorophyll a', 2 phylloquinones and 3 4Fe-4S clusters. PSI core antenna: 90 chlorophyll a, 22 carotenoids, 3 phospholipids and 1 galactolipid. P700 is a chlorophyll a/chlorophyll a' dimer, A0 is one or more chlorophyll a, A1 is one or both phylloquinones and FX is a shared 4Fe-4S iron-sulfur center.</text>
</comment>
<comment type="subunit">
    <text evidence="1">The PsaA/B heterodimer binds the P700 chlorophyll special pair and subsequent electron acceptors. PSI consists of a core antenna complex that captures photons, and an electron transfer chain that converts photonic excitation into a charge separation. The cyanobacterial PSI reaction center is composed of one copy each of PsaA,B,C,D,E,F,I,J,K,L,M and X, and forms trimeric complexes.</text>
</comment>
<comment type="subcellular location">
    <subcellularLocation>
        <location evidence="1">Cellular thylakoid membrane</location>
        <topology evidence="1">Multi-pass membrane protein</topology>
    </subcellularLocation>
</comment>
<comment type="similarity">
    <text evidence="1">Belongs to the PsaA/PsaB family.</text>
</comment>
<organism>
    <name type="scientific">Rippkaea orientalis (strain PCC 8801 / RF-1)</name>
    <name type="common">Cyanothece sp. (strain PCC 8801)</name>
    <dbReference type="NCBI Taxonomy" id="41431"/>
    <lineage>
        <taxon>Bacteria</taxon>
        <taxon>Bacillati</taxon>
        <taxon>Cyanobacteriota</taxon>
        <taxon>Cyanophyceae</taxon>
        <taxon>Oscillatoriophycideae</taxon>
        <taxon>Chroococcales</taxon>
        <taxon>Aphanothecaceae</taxon>
        <taxon>Rippkaea</taxon>
        <taxon>Rippkaea orientalis</taxon>
    </lineage>
</organism>
<gene>
    <name evidence="1" type="primary">psaA</name>
    <name type="ordered locus">PCC8801_4103</name>
</gene>